<sequence length="212" mass="23353">MSKGFLVSLEGPEGAGKTSVLEALLPILEEKGVEVLTTREPGGVLIGEKIREVILDPSHTQMDAKTELLLYIASRRQHLVEKVLPALEAGKLVIMDRFIDSSVAYQGFGRGLDIEAIDWLNQFATDGLKPDLTLYFDIEVEEGLARIAANSDREVNRLDLEGLDLHKKVRQGYLSLLDKEGNRIVKIDASLPLEQVVETTKAVLFDGMGLAK</sequence>
<organism>
    <name type="scientific">Streptococcus pneumoniae serotype 4 (strain ATCC BAA-334 / TIGR4)</name>
    <dbReference type="NCBI Taxonomy" id="170187"/>
    <lineage>
        <taxon>Bacteria</taxon>
        <taxon>Bacillati</taxon>
        <taxon>Bacillota</taxon>
        <taxon>Bacilli</taxon>
        <taxon>Lactobacillales</taxon>
        <taxon>Streptococcaceae</taxon>
        <taxon>Streptococcus</taxon>
    </lineage>
</organism>
<reference key="1">
    <citation type="journal article" date="2001" name="Science">
        <title>Complete genome sequence of a virulent isolate of Streptococcus pneumoniae.</title>
        <authorList>
            <person name="Tettelin H."/>
            <person name="Nelson K.E."/>
            <person name="Paulsen I.T."/>
            <person name="Eisen J.A."/>
            <person name="Read T.D."/>
            <person name="Peterson S.N."/>
            <person name="Heidelberg J.F."/>
            <person name="DeBoy R.T."/>
            <person name="Haft D.H."/>
            <person name="Dodson R.J."/>
            <person name="Durkin A.S."/>
            <person name="Gwinn M.L."/>
            <person name="Kolonay J.F."/>
            <person name="Nelson W.C."/>
            <person name="Peterson J.D."/>
            <person name="Umayam L.A."/>
            <person name="White O."/>
            <person name="Salzberg S.L."/>
            <person name="Lewis M.R."/>
            <person name="Radune D."/>
            <person name="Holtzapple E.K."/>
            <person name="Khouri H.M."/>
            <person name="Wolf A.M."/>
            <person name="Utterback T.R."/>
            <person name="Hansen C.L."/>
            <person name="McDonald L.A."/>
            <person name="Feldblyum T.V."/>
            <person name="Angiuoli S.V."/>
            <person name="Dickinson T."/>
            <person name="Hickey E.K."/>
            <person name="Holt I.E."/>
            <person name="Loftus B.J."/>
            <person name="Yang F."/>
            <person name="Smith H.O."/>
            <person name="Venter J.C."/>
            <person name="Dougherty B.A."/>
            <person name="Morrison D.A."/>
            <person name="Hollingshead S.K."/>
            <person name="Fraser C.M."/>
        </authorList>
    </citation>
    <scope>NUCLEOTIDE SEQUENCE [LARGE SCALE GENOMIC DNA]</scope>
    <source>
        <strain>ATCC BAA-334 / TIGR4</strain>
    </source>
</reference>
<feature type="chain" id="PRO_0000155349" description="Thymidylate kinase">
    <location>
        <begin position="1"/>
        <end position="212"/>
    </location>
</feature>
<feature type="binding site" evidence="1">
    <location>
        <begin position="11"/>
        <end position="18"/>
    </location>
    <ligand>
        <name>ATP</name>
        <dbReference type="ChEBI" id="CHEBI:30616"/>
    </ligand>
</feature>
<protein>
    <recommendedName>
        <fullName evidence="1">Thymidylate kinase</fullName>
        <ecNumber evidence="1">2.7.4.9</ecNumber>
    </recommendedName>
    <alternativeName>
        <fullName evidence="1">dTMP kinase</fullName>
    </alternativeName>
</protein>
<evidence type="ECO:0000255" key="1">
    <source>
        <dbReference type="HAMAP-Rule" id="MF_00165"/>
    </source>
</evidence>
<keyword id="KW-0067">ATP-binding</keyword>
<keyword id="KW-0418">Kinase</keyword>
<keyword id="KW-0545">Nucleotide biosynthesis</keyword>
<keyword id="KW-0547">Nucleotide-binding</keyword>
<keyword id="KW-1185">Reference proteome</keyword>
<keyword id="KW-0808">Transferase</keyword>
<accession>Q97R91</accession>
<proteinExistence type="evidence at protein level"/>
<comment type="function">
    <text evidence="1">Phosphorylation of dTMP to form dTDP in both de novo and salvage pathways of dTTP synthesis.</text>
</comment>
<comment type="catalytic activity">
    <reaction evidence="1">
        <text>dTMP + ATP = dTDP + ADP</text>
        <dbReference type="Rhea" id="RHEA:13517"/>
        <dbReference type="ChEBI" id="CHEBI:30616"/>
        <dbReference type="ChEBI" id="CHEBI:58369"/>
        <dbReference type="ChEBI" id="CHEBI:63528"/>
        <dbReference type="ChEBI" id="CHEBI:456216"/>
        <dbReference type="EC" id="2.7.4.9"/>
    </reaction>
</comment>
<comment type="interaction">
    <interactant intactId="EBI-6473884">
        <id>Q97R91</id>
    </interactant>
    <interactant intactId="EBI-6473888">
        <id>Q97P99</id>
        <label>tmcAL</label>
    </interactant>
    <organismsDiffer>false</organismsDiffer>
    <experiments>3</experiments>
</comment>
<comment type="similarity">
    <text evidence="1">Belongs to the thymidylate kinase family.</text>
</comment>
<name>KTHY_STRPN</name>
<dbReference type="EC" id="2.7.4.9" evidence="1"/>
<dbReference type="EMBL" id="AE005672">
    <property type="protein sequence ID" value="AAK75059.1"/>
    <property type="molecule type" value="Genomic_DNA"/>
</dbReference>
<dbReference type="PIR" id="B95108">
    <property type="entry name" value="B95108"/>
</dbReference>
<dbReference type="RefSeq" id="WP_000033362.1">
    <property type="nucleotide sequence ID" value="NZ_CP155539.1"/>
</dbReference>
<dbReference type="SMR" id="Q97R91"/>
<dbReference type="IntAct" id="Q97R91">
    <property type="interactions" value="1"/>
</dbReference>
<dbReference type="PaxDb" id="170187-SP_0935"/>
<dbReference type="EnsemblBacteria" id="AAK75059">
    <property type="protein sequence ID" value="AAK75059"/>
    <property type="gene ID" value="SP_0935"/>
</dbReference>
<dbReference type="GeneID" id="45218575"/>
<dbReference type="KEGG" id="spn:SP_0935"/>
<dbReference type="eggNOG" id="COG0125">
    <property type="taxonomic scope" value="Bacteria"/>
</dbReference>
<dbReference type="PhylomeDB" id="Q97R91"/>
<dbReference type="BioCyc" id="SPNE170187:G1FZB-961-MONOMER"/>
<dbReference type="Proteomes" id="UP000000585">
    <property type="component" value="Chromosome"/>
</dbReference>
<dbReference type="GO" id="GO:0005829">
    <property type="term" value="C:cytosol"/>
    <property type="evidence" value="ECO:0007669"/>
    <property type="project" value="TreeGrafter"/>
</dbReference>
<dbReference type="GO" id="GO:0005524">
    <property type="term" value="F:ATP binding"/>
    <property type="evidence" value="ECO:0007669"/>
    <property type="project" value="UniProtKB-UniRule"/>
</dbReference>
<dbReference type="GO" id="GO:0004798">
    <property type="term" value="F:dTMP kinase activity"/>
    <property type="evidence" value="ECO:0007669"/>
    <property type="project" value="UniProtKB-UniRule"/>
</dbReference>
<dbReference type="GO" id="GO:0006233">
    <property type="term" value="P:dTDP biosynthetic process"/>
    <property type="evidence" value="ECO:0007669"/>
    <property type="project" value="InterPro"/>
</dbReference>
<dbReference type="GO" id="GO:0006235">
    <property type="term" value="P:dTTP biosynthetic process"/>
    <property type="evidence" value="ECO:0007669"/>
    <property type="project" value="UniProtKB-UniRule"/>
</dbReference>
<dbReference type="GO" id="GO:0006227">
    <property type="term" value="P:dUDP biosynthetic process"/>
    <property type="evidence" value="ECO:0007669"/>
    <property type="project" value="TreeGrafter"/>
</dbReference>
<dbReference type="CDD" id="cd01672">
    <property type="entry name" value="TMPK"/>
    <property type="match status" value="1"/>
</dbReference>
<dbReference type="FunFam" id="3.40.50.300:FF:000225">
    <property type="entry name" value="Thymidylate kinase"/>
    <property type="match status" value="1"/>
</dbReference>
<dbReference type="Gene3D" id="3.40.50.300">
    <property type="entry name" value="P-loop containing nucleotide triphosphate hydrolases"/>
    <property type="match status" value="1"/>
</dbReference>
<dbReference type="HAMAP" id="MF_00165">
    <property type="entry name" value="Thymidylate_kinase"/>
    <property type="match status" value="1"/>
</dbReference>
<dbReference type="InterPro" id="IPR027417">
    <property type="entry name" value="P-loop_NTPase"/>
</dbReference>
<dbReference type="InterPro" id="IPR039430">
    <property type="entry name" value="Thymidylate_kin-like_dom"/>
</dbReference>
<dbReference type="InterPro" id="IPR018095">
    <property type="entry name" value="Thymidylate_kin_CS"/>
</dbReference>
<dbReference type="InterPro" id="IPR018094">
    <property type="entry name" value="Thymidylate_kinase"/>
</dbReference>
<dbReference type="NCBIfam" id="TIGR00041">
    <property type="entry name" value="DTMP_kinase"/>
    <property type="match status" value="1"/>
</dbReference>
<dbReference type="PANTHER" id="PTHR10344">
    <property type="entry name" value="THYMIDYLATE KINASE"/>
    <property type="match status" value="1"/>
</dbReference>
<dbReference type="PANTHER" id="PTHR10344:SF4">
    <property type="entry name" value="UMP-CMP KINASE 2, MITOCHONDRIAL"/>
    <property type="match status" value="1"/>
</dbReference>
<dbReference type="Pfam" id="PF02223">
    <property type="entry name" value="Thymidylate_kin"/>
    <property type="match status" value="1"/>
</dbReference>
<dbReference type="SUPFAM" id="SSF52540">
    <property type="entry name" value="P-loop containing nucleoside triphosphate hydrolases"/>
    <property type="match status" value="1"/>
</dbReference>
<dbReference type="PROSITE" id="PS01331">
    <property type="entry name" value="THYMIDYLATE_KINASE"/>
    <property type="match status" value="1"/>
</dbReference>
<gene>
    <name evidence="1" type="primary">tmk</name>
    <name type="ordered locus">SP_0935</name>
</gene>